<reference key="1">
    <citation type="journal article" date="2009" name="J. Bacteriol.">
        <title>Genome sequences of three Agrobacterium biovars help elucidate the evolution of multichromosome genomes in bacteria.</title>
        <authorList>
            <person name="Slater S.C."/>
            <person name="Goldman B.S."/>
            <person name="Goodner B."/>
            <person name="Setubal J.C."/>
            <person name="Farrand S.K."/>
            <person name="Nester E.W."/>
            <person name="Burr T.J."/>
            <person name="Banta L."/>
            <person name="Dickerman A.W."/>
            <person name="Paulsen I."/>
            <person name="Otten L."/>
            <person name="Suen G."/>
            <person name="Welch R."/>
            <person name="Almeida N.F."/>
            <person name="Arnold F."/>
            <person name="Burton O.T."/>
            <person name="Du Z."/>
            <person name="Ewing A."/>
            <person name="Godsy E."/>
            <person name="Heisel S."/>
            <person name="Houmiel K.L."/>
            <person name="Jhaveri J."/>
            <person name="Lu J."/>
            <person name="Miller N.M."/>
            <person name="Norton S."/>
            <person name="Chen Q."/>
            <person name="Phoolcharoen W."/>
            <person name="Ohlin V."/>
            <person name="Ondrusek D."/>
            <person name="Pride N."/>
            <person name="Stricklin S.L."/>
            <person name="Sun J."/>
            <person name="Wheeler C."/>
            <person name="Wilson L."/>
            <person name="Zhu H."/>
            <person name="Wood D.W."/>
        </authorList>
    </citation>
    <scope>NUCLEOTIDE SEQUENCE [LARGE SCALE GENOMIC DNA]</scope>
    <source>
        <strain>ATCC BAA-846 / DSM 112012 / S4</strain>
    </source>
</reference>
<gene>
    <name evidence="1" type="primary">proB</name>
    <name type="ordered locus">Avi_4281</name>
</gene>
<protein>
    <recommendedName>
        <fullName evidence="1">Glutamate 5-kinase</fullName>
        <ecNumber evidence="1">2.7.2.11</ecNumber>
    </recommendedName>
    <alternativeName>
        <fullName evidence="1">Gamma-glutamyl kinase</fullName>
        <shortName evidence="1">GK</shortName>
    </alternativeName>
</protein>
<sequence length="392" mass="41037">MSAPLASLSHYKRIVIKIGSALLVDRGAGLKHAWLDAVCDDIAALRAKGVEVLVVSSGAIALGRTVLNLPGGALKLEESQAAAAVGQIALARHWSESLSRSSIVAGQILLTLGDTEERRRYLNARATISQLLKLGAVPIINENDTVATTEIRYGDNDRLAARVATMTGADLLILLSDIDGLYTAPPHLDPEAKLLPVIAEITPEIEAMAGGAASELSRGGMRTKIDAGKIATSAGCAMIITSGKLLNPLRGIDEGAAHSWFAPSAMPVTARKTWIAGQLQPAGILSVDAGAETALRAGKSLLPAGVREVSGHFHRGDTISVVGLEGREIARGLAGYDADEARRIAGHKSAEIEALLGYAGRSAMIHRDDLVMTEQTGRKAGKSTKKKDEAHA</sequence>
<proteinExistence type="inferred from homology"/>
<evidence type="ECO:0000255" key="1">
    <source>
        <dbReference type="HAMAP-Rule" id="MF_00456"/>
    </source>
</evidence>
<evidence type="ECO:0000256" key="2">
    <source>
        <dbReference type="SAM" id="MobiDB-lite"/>
    </source>
</evidence>
<dbReference type="EC" id="2.7.2.11" evidence="1"/>
<dbReference type="EMBL" id="CP000633">
    <property type="protein sequence ID" value="ACM38101.1"/>
    <property type="molecule type" value="Genomic_DNA"/>
</dbReference>
<dbReference type="RefSeq" id="WP_015917512.1">
    <property type="nucleotide sequence ID" value="NC_011989.1"/>
</dbReference>
<dbReference type="SMR" id="B9JUH8"/>
<dbReference type="STRING" id="311402.Avi_4281"/>
<dbReference type="KEGG" id="avi:Avi_4281"/>
<dbReference type="eggNOG" id="COG0263">
    <property type="taxonomic scope" value="Bacteria"/>
</dbReference>
<dbReference type="HOGENOM" id="CLU_025400_2_0_5"/>
<dbReference type="UniPathway" id="UPA00098">
    <property type="reaction ID" value="UER00359"/>
</dbReference>
<dbReference type="Proteomes" id="UP000001596">
    <property type="component" value="Chromosome 1"/>
</dbReference>
<dbReference type="GO" id="GO:0005829">
    <property type="term" value="C:cytosol"/>
    <property type="evidence" value="ECO:0007669"/>
    <property type="project" value="TreeGrafter"/>
</dbReference>
<dbReference type="GO" id="GO:0005524">
    <property type="term" value="F:ATP binding"/>
    <property type="evidence" value="ECO:0007669"/>
    <property type="project" value="UniProtKB-KW"/>
</dbReference>
<dbReference type="GO" id="GO:0004349">
    <property type="term" value="F:glutamate 5-kinase activity"/>
    <property type="evidence" value="ECO:0007669"/>
    <property type="project" value="UniProtKB-UniRule"/>
</dbReference>
<dbReference type="GO" id="GO:0003723">
    <property type="term" value="F:RNA binding"/>
    <property type="evidence" value="ECO:0007669"/>
    <property type="project" value="InterPro"/>
</dbReference>
<dbReference type="GO" id="GO:0055129">
    <property type="term" value="P:L-proline biosynthetic process"/>
    <property type="evidence" value="ECO:0007669"/>
    <property type="project" value="UniProtKB-UniRule"/>
</dbReference>
<dbReference type="CDD" id="cd04242">
    <property type="entry name" value="AAK_G5K_ProB"/>
    <property type="match status" value="1"/>
</dbReference>
<dbReference type="CDD" id="cd21157">
    <property type="entry name" value="PUA_G5K"/>
    <property type="match status" value="1"/>
</dbReference>
<dbReference type="FunFam" id="2.30.130.10:FF:000007">
    <property type="entry name" value="Glutamate 5-kinase"/>
    <property type="match status" value="1"/>
</dbReference>
<dbReference type="FunFam" id="3.40.1160.10:FF:000018">
    <property type="entry name" value="Glutamate 5-kinase"/>
    <property type="match status" value="1"/>
</dbReference>
<dbReference type="Gene3D" id="3.40.1160.10">
    <property type="entry name" value="Acetylglutamate kinase-like"/>
    <property type="match status" value="1"/>
</dbReference>
<dbReference type="Gene3D" id="2.30.130.10">
    <property type="entry name" value="PUA domain"/>
    <property type="match status" value="1"/>
</dbReference>
<dbReference type="HAMAP" id="MF_00456">
    <property type="entry name" value="ProB"/>
    <property type="match status" value="1"/>
</dbReference>
<dbReference type="InterPro" id="IPR036393">
    <property type="entry name" value="AceGlu_kinase-like_sf"/>
</dbReference>
<dbReference type="InterPro" id="IPR001048">
    <property type="entry name" value="Asp/Glu/Uridylate_kinase"/>
</dbReference>
<dbReference type="InterPro" id="IPR041739">
    <property type="entry name" value="G5K_ProB"/>
</dbReference>
<dbReference type="InterPro" id="IPR001057">
    <property type="entry name" value="Glu/AcGlu_kinase"/>
</dbReference>
<dbReference type="InterPro" id="IPR011529">
    <property type="entry name" value="Glu_5kinase"/>
</dbReference>
<dbReference type="InterPro" id="IPR005715">
    <property type="entry name" value="Glu_5kinase/COase_Synthase"/>
</dbReference>
<dbReference type="InterPro" id="IPR019797">
    <property type="entry name" value="Glutamate_5-kinase_CS"/>
</dbReference>
<dbReference type="InterPro" id="IPR002478">
    <property type="entry name" value="PUA"/>
</dbReference>
<dbReference type="InterPro" id="IPR015947">
    <property type="entry name" value="PUA-like_sf"/>
</dbReference>
<dbReference type="InterPro" id="IPR036974">
    <property type="entry name" value="PUA_sf"/>
</dbReference>
<dbReference type="NCBIfam" id="TIGR01027">
    <property type="entry name" value="proB"/>
    <property type="match status" value="1"/>
</dbReference>
<dbReference type="PANTHER" id="PTHR43654">
    <property type="entry name" value="GLUTAMATE 5-KINASE"/>
    <property type="match status" value="1"/>
</dbReference>
<dbReference type="PANTHER" id="PTHR43654:SF1">
    <property type="entry name" value="ISOPENTENYL PHOSPHATE KINASE"/>
    <property type="match status" value="1"/>
</dbReference>
<dbReference type="Pfam" id="PF00696">
    <property type="entry name" value="AA_kinase"/>
    <property type="match status" value="1"/>
</dbReference>
<dbReference type="Pfam" id="PF01472">
    <property type="entry name" value="PUA"/>
    <property type="match status" value="1"/>
</dbReference>
<dbReference type="PIRSF" id="PIRSF000729">
    <property type="entry name" value="GK"/>
    <property type="match status" value="1"/>
</dbReference>
<dbReference type="PRINTS" id="PR00474">
    <property type="entry name" value="GLU5KINASE"/>
</dbReference>
<dbReference type="SMART" id="SM00359">
    <property type="entry name" value="PUA"/>
    <property type="match status" value="1"/>
</dbReference>
<dbReference type="SUPFAM" id="SSF53633">
    <property type="entry name" value="Carbamate kinase-like"/>
    <property type="match status" value="1"/>
</dbReference>
<dbReference type="SUPFAM" id="SSF88697">
    <property type="entry name" value="PUA domain-like"/>
    <property type="match status" value="1"/>
</dbReference>
<dbReference type="PROSITE" id="PS00902">
    <property type="entry name" value="GLUTAMATE_5_KINASE"/>
    <property type="match status" value="1"/>
</dbReference>
<dbReference type="PROSITE" id="PS50890">
    <property type="entry name" value="PUA"/>
    <property type="match status" value="1"/>
</dbReference>
<organism>
    <name type="scientific">Allorhizobium ampelinum (strain ATCC BAA-846 / DSM 112012 / S4)</name>
    <name type="common">Agrobacterium vitis (strain S4)</name>
    <dbReference type="NCBI Taxonomy" id="311402"/>
    <lineage>
        <taxon>Bacteria</taxon>
        <taxon>Pseudomonadati</taxon>
        <taxon>Pseudomonadota</taxon>
        <taxon>Alphaproteobacteria</taxon>
        <taxon>Hyphomicrobiales</taxon>
        <taxon>Rhizobiaceae</taxon>
        <taxon>Rhizobium/Agrobacterium group</taxon>
        <taxon>Allorhizobium</taxon>
        <taxon>Allorhizobium ampelinum</taxon>
    </lineage>
</organism>
<feature type="chain" id="PRO_1000193683" description="Glutamate 5-kinase">
    <location>
        <begin position="1"/>
        <end position="392"/>
    </location>
</feature>
<feature type="domain" description="PUA" evidence="1">
    <location>
        <begin position="282"/>
        <end position="359"/>
    </location>
</feature>
<feature type="region of interest" description="Disordered" evidence="2">
    <location>
        <begin position="373"/>
        <end position="392"/>
    </location>
</feature>
<feature type="binding site" evidence="1">
    <location>
        <position position="17"/>
    </location>
    <ligand>
        <name>ATP</name>
        <dbReference type="ChEBI" id="CHEBI:30616"/>
    </ligand>
</feature>
<feature type="binding site" evidence="1">
    <location>
        <position position="57"/>
    </location>
    <ligand>
        <name>substrate</name>
    </ligand>
</feature>
<feature type="binding site" evidence="1">
    <location>
        <position position="144"/>
    </location>
    <ligand>
        <name>substrate</name>
    </ligand>
</feature>
<feature type="binding site" evidence="1">
    <location>
        <position position="156"/>
    </location>
    <ligand>
        <name>substrate</name>
    </ligand>
</feature>
<feature type="binding site" evidence="1">
    <location>
        <begin position="176"/>
        <end position="177"/>
    </location>
    <ligand>
        <name>ATP</name>
        <dbReference type="ChEBI" id="CHEBI:30616"/>
    </ligand>
</feature>
<name>PROB_ALLAM</name>
<comment type="function">
    <text evidence="1">Catalyzes the transfer of a phosphate group to glutamate to form L-glutamate 5-phosphate.</text>
</comment>
<comment type="catalytic activity">
    <reaction evidence="1">
        <text>L-glutamate + ATP = L-glutamyl 5-phosphate + ADP</text>
        <dbReference type="Rhea" id="RHEA:14877"/>
        <dbReference type="ChEBI" id="CHEBI:29985"/>
        <dbReference type="ChEBI" id="CHEBI:30616"/>
        <dbReference type="ChEBI" id="CHEBI:58274"/>
        <dbReference type="ChEBI" id="CHEBI:456216"/>
        <dbReference type="EC" id="2.7.2.11"/>
    </reaction>
</comment>
<comment type="pathway">
    <text evidence="1">Amino-acid biosynthesis; L-proline biosynthesis; L-glutamate 5-semialdehyde from L-glutamate: step 1/2.</text>
</comment>
<comment type="subcellular location">
    <subcellularLocation>
        <location evidence="1">Cytoplasm</location>
    </subcellularLocation>
</comment>
<comment type="similarity">
    <text evidence="1">Belongs to the glutamate 5-kinase family.</text>
</comment>
<accession>B9JUH8</accession>
<keyword id="KW-0028">Amino-acid biosynthesis</keyword>
<keyword id="KW-0067">ATP-binding</keyword>
<keyword id="KW-0963">Cytoplasm</keyword>
<keyword id="KW-0418">Kinase</keyword>
<keyword id="KW-0547">Nucleotide-binding</keyword>
<keyword id="KW-0641">Proline biosynthesis</keyword>
<keyword id="KW-1185">Reference proteome</keyword>
<keyword id="KW-0808">Transferase</keyword>